<name>I20RA_MOUSE</name>
<organism>
    <name type="scientific">Mus musculus</name>
    <name type="common">Mouse</name>
    <dbReference type="NCBI Taxonomy" id="10090"/>
    <lineage>
        <taxon>Eukaryota</taxon>
        <taxon>Metazoa</taxon>
        <taxon>Chordata</taxon>
        <taxon>Craniata</taxon>
        <taxon>Vertebrata</taxon>
        <taxon>Euteleostomi</taxon>
        <taxon>Mammalia</taxon>
        <taxon>Eutheria</taxon>
        <taxon>Euarchontoglires</taxon>
        <taxon>Glires</taxon>
        <taxon>Rodentia</taxon>
        <taxon>Myomorpha</taxon>
        <taxon>Muroidea</taxon>
        <taxon>Muridae</taxon>
        <taxon>Murinae</taxon>
        <taxon>Mus</taxon>
        <taxon>Mus</taxon>
    </lineage>
</organism>
<comment type="function">
    <text evidence="1">The IL20RA/IL20RB dimer is a receptor for IL19, IL20 and IL24. The IL20RA/IL10RB dimer is a receptor for IL26 (By similarity).</text>
</comment>
<comment type="subunit">
    <text evidence="1">Heterodimer with IL20RB and heterodimer with IL10RB.</text>
</comment>
<comment type="subcellular location">
    <subcellularLocation>
        <location evidence="1">Membrane</location>
        <topology evidence="1">Single-pass type I membrane protein</topology>
    </subcellularLocation>
</comment>
<comment type="similarity">
    <text evidence="4">Belongs to the type II cytokine receptor family.</text>
</comment>
<accession>Q6PHB0</accession>
<accession>Q8BW64</accession>
<dbReference type="EMBL" id="AK054215">
    <property type="protein sequence ID" value="BAC35695.1"/>
    <property type="molecule type" value="mRNA"/>
</dbReference>
<dbReference type="EMBL" id="BC056628">
    <property type="protein sequence ID" value="AAH56628.1"/>
    <property type="molecule type" value="mRNA"/>
</dbReference>
<dbReference type="CCDS" id="CCDS23718.1"/>
<dbReference type="RefSeq" id="NP_766374.1">
    <property type="nucleotide sequence ID" value="NM_172786.2"/>
</dbReference>
<dbReference type="RefSeq" id="XP_006512789.1">
    <property type="nucleotide sequence ID" value="XM_006512726.1"/>
</dbReference>
<dbReference type="SMR" id="Q6PHB0"/>
<dbReference type="FunCoup" id="Q6PHB0">
    <property type="interactions" value="374"/>
</dbReference>
<dbReference type="STRING" id="10090.ENSMUSP00000020185"/>
<dbReference type="GlyCosmos" id="Q6PHB0">
    <property type="glycosylation" value="5 sites, No reported glycans"/>
</dbReference>
<dbReference type="GlyGen" id="Q6PHB0">
    <property type="glycosylation" value="5 sites"/>
</dbReference>
<dbReference type="PaxDb" id="10090-ENSMUSP00000020185"/>
<dbReference type="Antibodypedia" id="33022">
    <property type="antibodies" value="394 antibodies from 31 providers"/>
</dbReference>
<dbReference type="DNASU" id="237313"/>
<dbReference type="Ensembl" id="ENSMUST00000020185.5">
    <property type="protein sequence ID" value="ENSMUSP00000020185.4"/>
    <property type="gene ID" value="ENSMUSG00000020007.5"/>
</dbReference>
<dbReference type="GeneID" id="237313"/>
<dbReference type="KEGG" id="mmu:237313"/>
<dbReference type="UCSC" id="uc007eni.1">
    <property type="organism name" value="mouse"/>
</dbReference>
<dbReference type="AGR" id="MGI:3605069"/>
<dbReference type="CTD" id="53832"/>
<dbReference type="MGI" id="MGI:3605069">
    <property type="gene designation" value="Il20ra"/>
</dbReference>
<dbReference type="VEuPathDB" id="HostDB:ENSMUSG00000020007"/>
<dbReference type="eggNOG" id="ENOG502RPFC">
    <property type="taxonomic scope" value="Eukaryota"/>
</dbReference>
<dbReference type="GeneTree" id="ENSGT00940000157314"/>
<dbReference type="HOGENOM" id="CLU_527430_0_0_1"/>
<dbReference type="InParanoid" id="Q6PHB0"/>
<dbReference type="OMA" id="KCEYSEC"/>
<dbReference type="OrthoDB" id="9909056at2759"/>
<dbReference type="PhylomeDB" id="Q6PHB0"/>
<dbReference type="TreeFam" id="TF334107"/>
<dbReference type="Reactome" id="R-MMU-8854691">
    <property type="pathway name" value="Interleukin-20 family signaling"/>
</dbReference>
<dbReference type="BioGRID-ORCS" id="237313">
    <property type="hits" value="3 hits in 76 CRISPR screens"/>
</dbReference>
<dbReference type="PRO" id="PR:Q6PHB0"/>
<dbReference type="Proteomes" id="UP000000589">
    <property type="component" value="Chromosome 10"/>
</dbReference>
<dbReference type="RNAct" id="Q6PHB0">
    <property type="molecule type" value="protein"/>
</dbReference>
<dbReference type="Bgee" id="ENSMUSG00000020007">
    <property type="expression patterns" value="Expressed in mesodermal cell in embryo and 26 other cell types or tissues"/>
</dbReference>
<dbReference type="ExpressionAtlas" id="Q6PHB0">
    <property type="expression patterns" value="baseline and differential"/>
</dbReference>
<dbReference type="GO" id="GO:0016020">
    <property type="term" value="C:membrane"/>
    <property type="evidence" value="ECO:0007669"/>
    <property type="project" value="UniProtKB-SubCell"/>
</dbReference>
<dbReference type="GO" id="GO:0042015">
    <property type="term" value="F:interleukin-20 binding"/>
    <property type="evidence" value="ECO:0000353"/>
    <property type="project" value="MGI"/>
</dbReference>
<dbReference type="GO" id="GO:0019221">
    <property type="term" value="P:cytokine-mediated signaling pathway"/>
    <property type="evidence" value="ECO:0000315"/>
    <property type="project" value="MGI"/>
</dbReference>
<dbReference type="GO" id="GO:2001244">
    <property type="term" value="P:positive regulation of intrinsic apoptotic signaling pathway"/>
    <property type="evidence" value="ECO:0000316"/>
    <property type="project" value="MGI"/>
</dbReference>
<dbReference type="GO" id="GO:0045124">
    <property type="term" value="P:regulation of bone resorption"/>
    <property type="evidence" value="ECO:0000315"/>
    <property type="project" value="MGI"/>
</dbReference>
<dbReference type="CDD" id="cd00063">
    <property type="entry name" value="FN3"/>
    <property type="match status" value="1"/>
</dbReference>
<dbReference type="FunFam" id="2.60.40.10:FF:000348">
    <property type="entry name" value="Interleukin 20 receptor subunit alpha"/>
    <property type="match status" value="1"/>
</dbReference>
<dbReference type="FunFam" id="2.60.40.10:FF:000926">
    <property type="entry name" value="Interleukin 20 receptor subunit alpha"/>
    <property type="match status" value="1"/>
</dbReference>
<dbReference type="Gene3D" id="2.60.40.10">
    <property type="entry name" value="Immunoglobulins"/>
    <property type="match status" value="2"/>
</dbReference>
<dbReference type="InterPro" id="IPR003961">
    <property type="entry name" value="FN3_dom"/>
</dbReference>
<dbReference type="InterPro" id="IPR036116">
    <property type="entry name" value="FN3_sf"/>
</dbReference>
<dbReference type="InterPro" id="IPR013783">
    <property type="entry name" value="Ig-like_fold"/>
</dbReference>
<dbReference type="InterPro" id="IPR015373">
    <property type="entry name" value="Interferon/interleukin_rcp_dom"/>
</dbReference>
<dbReference type="InterPro" id="IPR050650">
    <property type="entry name" value="Type-II_Cytokine-TF_Rcpt"/>
</dbReference>
<dbReference type="PANTHER" id="PTHR20859">
    <property type="entry name" value="INTERFERON/INTERLEUKIN RECEPTOR"/>
    <property type="match status" value="1"/>
</dbReference>
<dbReference type="PANTHER" id="PTHR20859:SF86">
    <property type="entry name" value="INTERLEUKIN-20 RECEPTOR SUBUNIT ALPHA"/>
    <property type="match status" value="1"/>
</dbReference>
<dbReference type="Pfam" id="PF09294">
    <property type="entry name" value="Interfer-bind"/>
    <property type="match status" value="1"/>
</dbReference>
<dbReference type="Pfam" id="PF01108">
    <property type="entry name" value="Tissue_fac"/>
    <property type="match status" value="1"/>
</dbReference>
<dbReference type="SUPFAM" id="SSF49265">
    <property type="entry name" value="Fibronectin type III"/>
    <property type="match status" value="2"/>
</dbReference>
<dbReference type="PROSITE" id="PS50853">
    <property type="entry name" value="FN3"/>
    <property type="match status" value="2"/>
</dbReference>
<reference key="1">
    <citation type="journal article" date="2005" name="Science">
        <title>The transcriptional landscape of the mammalian genome.</title>
        <authorList>
            <person name="Carninci P."/>
            <person name="Kasukawa T."/>
            <person name="Katayama S."/>
            <person name="Gough J."/>
            <person name="Frith M.C."/>
            <person name="Maeda N."/>
            <person name="Oyama R."/>
            <person name="Ravasi T."/>
            <person name="Lenhard B."/>
            <person name="Wells C."/>
            <person name="Kodzius R."/>
            <person name="Shimokawa K."/>
            <person name="Bajic V.B."/>
            <person name="Brenner S.E."/>
            <person name="Batalov S."/>
            <person name="Forrest A.R."/>
            <person name="Zavolan M."/>
            <person name="Davis M.J."/>
            <person name="Wilming L.G."/>
            <person name="Aidinis V."/>
            <person name="Allen J.E."/>
            <person name="Ambesi-Impiombato A."/>
            <person name="Apweiler R."/>
            <person name="Aturaliya R.N."/>
            <person name="Bailey T.L."/>
            <person name="Bansal M."/>
            <person name="Baxter L."/>
            <person name="Beisel K.W."/>
            <person name="Bersano T."/>
            <person name="Bono H."/>
            <person name="Chalk A.M."/>
            <person name="Chiu K.P."/>
            <person name="Choudhary V."/>
            <person name="Christoffels A."/>
            <person name="Clutterbuck D.R."/>
            <person name="Crowe M.L."/>
            <person name="Dalla E."/>
            <person name="Dalrymple B.P."/>
            <person name="de Bono B."/>
            <person name="Della Gatta G."/>
            <person name="di Bernardo D."/>
            <person name="Down T."/>
            <person name="Engstrom P."/>
            <person name="Fagiolini M."/>
            <person name="Faulkner G."/>
            <person name="Fletcher C.F."/>
            <person name="Fukushima T."/>
            <person name="Furuno M."/>
            <person name="Futaki S."/>
            <person name="Gariboldi M."/>
            <person name="Georgii-Hemming P."/>
            <person name="Gingeras T.R."/>
            <person name="Gojobori T."/>
            <person name="Green R.E."/>
            <person name="Gustincich S."/>
            <person name="Harbers M."/>
            <person name="Hayashi Y."/>
            <person name="Hensch T.K."/>
            <person name="Hirokawa N."/>
            <person name="Hill D."/>
            <person name="Huminiecki L."/>
            <person name="Iacono M."/>
            <person name="Ikeo K."/>
            <person name="Iwama A."/>
            <person name="Ishikawa T."/>
            <person name="Jakt M."/>
            <person name="Kanapin A."/>
            <person name="Katoh M."/>
            <person name="Kawasawa Y."/>
            <person name="Kelso J."/>
            <person name="Kitamura H."/>
            <person name="Kitano H."/>
            <person name="Kollias G."/>
            <person name="Krishnan S.P."/>
            <person name="Kruger A."/>
            <person name="Kummerfeld S.K."/>
            <person name="Kurochkin I.V."/>
            <person name="Lareau L.F."/>
            <person name="Lazarevic D."/>
            <person name="Lipovich L."/>
            <person name="Liu J."/>
            <person name="Liuni S."/>
            <person name="McWilliam S."/>
            <person name="Madan Babu M."/>
            <person name="Madera M."/>
            <person name="Marchionni L."/>
            <person name="Matsuda H."/>
            <person name="Matsuzawa S."/>
            <person name="Miki H."/>
            <person name="Mignone F."/>
            <person name="Miyake S."/>
            <person name="Morris K."/>
            <person name="Mottagui-Tabar S."/>
            <person name="Mulder N."/>
            <person name="Nakano N."/>
            <person name="Nakauchi H."/>
            <person name="Ng P."/>
            <person name="Nilsson R."/>
            <person name="Nishiguchi S."/>
            <person name="Nishikawa S."/>
            <person name="Nori F."/>
            <person name="Ohara O."/>
            <person name="Okazaki Y."/>
            <person name="Orlando V."/>
            <person name="Pang K.C."/>
            <person name="Pavan W.J."/>
            <person name="Pavesi G."/>
            <person name="Pesole G."/>
            <person name="Petrovsky N."/>
            <person name="Piazza S."/>
            <person name="Reed J."/>
            <person name="Reid J.F."/>
            <person name="Ring B.Z."/>
            <person name="Ringwald M."/>
            <person name="Rost B."/>
            <person name="Ruan Y."/>
            <person name="Salzberg S.L."/>
            <person name="Sandelin A."/>
            <person name="Schneider C."/>
            <person name="Schoenbach C."/>
            <person name="Sekiguchi K."/>
            <person name="Semple C.A."/>
            <person name="Seno S."/>
            <person name="Sessa L."/>
            <person name="Sheng Y."/>
            <person name="Shibata Y."/>
            <person name="Shimada H."/>
            <person name="Shimada K."/>
            <person name="Silva D."/>
            <person name="Sinclair B."/>
            <person name="Sperling S."/>
            <person name="Stupka E."/>
            <person name="Sugiura K."/>
            <person name="Sultana R."/>
            <person name="Takenaka Y."/>
            <person name="Taki K."/>
            <person name="Tammoja K."/>
            <person name="Tan S.L."/>
            <person name="Tang S."/>
            <person name="Taylor M.S."/>
            <person name="Tegner J."/>
            <person name="Teichmann S.A."/>
            <person name="Ueda H.R."/>
            <person name="van Nimwegen E."/>
            <person name="Verardo R."/>
            <person name="Wei C.L."/>
            <person name="Yagi K."/>
            <person name="Yamanishi H."/>
            <person name="Zabarovsky E."/>
            <person name="Zhu S."/>
            <person name="Zimmer A."/>
            <person name="Hide W."/>
            <person name="Bult C."/>
            <person name="Grimmond S.M."/>
            <person name="Teasdale R.D."/>
            <person name="Liu E.T."/>
            <person name="Brusic V."/>
            <person name="Quackenbush J."/>
            <person name="Wahlestedt C."/>
            <person name="Mattick J.S."/>
            <person name="Hume D.A."/>
            <person name="Kai C."/>
            <person name="Sasaki D."/>
            <person name="Tomaru Y."/>
            <person name="Fukuda S."/>
            <person name="Kanamori-Katayama M."/>
            <person name="Suzuki M."/>
            <person name="Aoki J."/>
            <person name="Arakawa T."/>
            <person name="Iida J."/>
            <person name="Imamura K."/>
            <person name="Itoh M."/>
            <person name="Kato T."/>
            <person name="Kawaji H."/>
            <person name="Kawagashira N."/>
            <person name="Kawashima T."/>
            <person name="Kojima M."/>
            <person name="Kondo S."/>
            <person name="Konno H."/>
            <person name="Nakano K."/>
            <person name="Ninomiya N."/>
            <person name="Nishio T."/>
            <person name="Okada M."/>
            <person name="Plessy C."/>
            <person name="Shibata K."/>
            <person name="Shiraki T."/>
            <person name="Suzuki S."/>
            <person name="Tagami M."/>
            <person name="Waki K."/>
            <person name="Watahiki A."/>
            <person name="Okamura-Oho Y."/>
            <person name="Suzuki H."/>
            <person name="Kawai J."/>
            <person name="Hayashizaki Y."/>
        </authorList>
    </citation>
    <scope>NUCLEOTIDE SEQUENCE [LARGE SCALE MRNA]</scope>
    <source>
        <strain>C57BL/6J</strain>
        <tissue>Oviduct</tissue>
    </source>
</reference>
<reference key="2">
    <citation type="journal article" date="2004" name="Genome Res.">
        <title>The status, quality, and expansion of the NIH full-length cDNA project: the Mammalian Gene Collection (MGC).</title>
        <authorList>
            <consortium name="The MGC Project Team"/>
        </authorList>
    </citation>
    <scope>NUCLEOTIDE SEQUENCE [LARGE SCALE MRNA]</scope>
    <source>
        <strain>129</strain>
        <tissue>Mammary tumor</tissue>
    </source>
</reference>
<gene>
    <name type="primary">Il20ra</name>
</gene>
<feature type="signal peptide" evidence="2">
    <location>
        <begin position="1"/>
        <end position="32"/>
    </location>
</feature>
<feature type="chain" id="PRO_0000011037" description="Interleukin-20 receptor subunit alpha">
    <location>
        <begin position="33"/>
        <end position="546"/>
    </location>
</feature>
<feature type="topological domain" description="Extracellular" evidence="2">
    <location>
        <begin position="33"/>
        <end position="253"/>
    </location>
</feature>
<feature type="transmembrane region" description="Helical" evidence="2">
    <location>
        <begin position="254"/>
        <end position="274"/>
    </location>
</feature>
<feature type="topological domain" description="Cytoplasmic" evidence="2">
    <location>
        <begin position="275"/>
        <end position="546"/>
    </location>
</feature>
<feature type="domain" description="Fibronectin type-III 1" evidence="3">
    <location>
        <begin position="42"/>
        <end position="138"/>
    </location>
</feature>
<feature type="domain" description="Fibronectin type-III 2" evidence="3">
    <location>
        <begin position="139"/>
        <end position="245"/>
    </location>
</feature>
<feature type="glycosylation site" description="N-linked (GlcNAc...) asparagine" evidence="2">
    <location>
        <position position="45"/>
    </location>
</feature>
<feature type="glycosylation site" description="N-linked (GlcNAc...) asparagine" evidence="2">
    <location>
        <position position="86"/>
    </location>
</feature>
<feature type="glycosylation site" description="N-linked (GlcNAc...) asparagine" evidence="2">
    <location>
        <position position="94"/>
    </location>
</feature>
<feature type="glycosylation site" description="N-linked (GlcNAc...) asparagine" evidence="2">
    <location>
        <position position="185"/>
    </location>
</feature>
<feature type="glycosylation site" description="N-linked (GlcNAc...) asparagine" evidence="2">
    <location>
        <position position="203"/>
    </location>
</feature>
<feature type="disulfide bond" evidence="1">
    <location>
        <begin position="90"/>
        <end position="98"/>
    </location>
</feature>
<feature type="disulfide bond" evidence="1">
    <location>
        <begin position="218"/>
        <end position="239"/>
    </location>
</feature>
<feature type="sequence conflict" description="In Ref. 2; AAH56628." evidence="4" ref="2">
    <original>V</original>
    <variation>I</variation>
    <location>
        <position position="145"/>
    </location>
</feature>
<protein>
    <recommendedName>
        <fullName>Interleukin-20 receptor subunit alpha</fullName>
        <shortName>IL-20 receptor subunit alpha</shortName>
        <shortName>IL-20R-alpha</shortName>
        <shortName>IL-20RA</shortName>
    </recommendedName>
    <alternativeName>
        <fullName>IL-20R1</fullName>
    </alternativeName>
</protein>
<sequence>MHTPGTPAPGHPDPPPLLLLTLLLLLAASGRAVPCVFCGLPKPTNITFLSINMKNVLHWNPPESLHGVEVTYTVQYFIYGQKKWLNASKCGSINRTYCDLSVETSDYEHQFYAKVKAIWEARCSEWAETERFYPFLETQVSPPEVALTTGEKSISIALTAPEKWKRNPQDHTVSMQQIYPNLKYNVSVYNTKSRRTWSQCVTNSTLVLSWLEPNTLYCVHVESLVPGPPRLPMPSQKQCISTLEVQTSAWKAKVIFWYVFLTSVIVFLFSAIGYLVYRYIHVGKEKHPANLVLIYRNEIGTRVFEPTETITLNFITFSMLDDTKISPKDMNLLDKSSDDISVNDPEHNEAWEPHWEEVEGQHLGCSSHLMDAVCGAEQRDGDTSLTQHGWLNSTIPTGETDTEPQYKVLSDFYGEGEIQLSCEPEEAARTEKISEPLVTSANLDPQLEDLHHLGQEHTVSEDGPEEETSITVVDWDPQTGRLCIPSLPIFGRDPENYGHYERDQLLEGGLLSRLYENQAPDKPEKENENCLTRFMEEWGLHVQMES</sequence>
<evidence type="ECO:0000250" key="1"/>
<evidence type="ECO:0000255" key="2"/>
<evidence type="ECO:0000255" key="3">
    <source>
        <dbReference type="PROSITE-ProRule" id="PRU00316"/>
    </source>
</evidence>
<evidence type="ECO:0000305" key="4"/>
<keyword id="KW-1015">Disulfide bond</keyword>
<keyword id="KW-0325">Glycoprotein</keyword>
<keyword id="KW-0472">Membrane</keyword>
<keyword id="KW-0675">Receptor</keyword>
<keyword id="KW-1185">Reference proteome</keyword>
<keyword id="KW-0677">Repeat</keyword>
<keyword id="KW-0732">Signal</keyword>
<keyword id="KW-0812">Transmembrane</keyword>
<keyword id="KW-1133">Transmembrane helix</keyword>
<proteinExistence type="evidence at transcript level"/>